<gene>
    <name evidence="1" type="primary">MAP2</name>
    <name type="ORF">CLUG_02040</name>
</gene>
<organism>
    <name type="scientific">Clavispora lusitaniae (strain ATCC 42720)</name>
    <name type="common">Yeast</name>
    <name type="synonym">Candida lusitaniae</name>
    <dbReference type="NCBI Taxonomy" id="306902"/>
    <lineage>
        <taxon>Eukaryota</taxon>
        <taxon>Fungi</taxon>
        <taxon>Dikarya</taxon>
        <taxon>Ascomycota</taxon>
        <taxon>Saccharomycotina</taxon>
        <taxon>Pichiomycetes</taxon>
        <taxon>Metschnikowiaceae</taxon>
        <taxon>Clavispora</taxon>
    </lineage>
</organism>
<reference key="1">
    <citation type="journal article" date="2009" name="Nature">
        <title>Evolution of pathogenicity and sexual reproduction in eight Candida genomes.</title>
        <authorList>
            <person name="Butler G."/>
            <person name="Rasmussen M.D."/>
            <person name="Lin M.F."/>
            <person name="Santos M.A.S."/>
            <person name="Sakthikumar S."/>
            <person name="Munro C.A."/>
            <person name="Rheinbay E."/>
            <person name="Grabherr M."/>
            <person name="Forche A."/>
            <person name="Reedy J.L."/>
            <person name="Agrafioti I."/>
            <person name="Arnaud M.B."/>
            <person name="Bates S."/>
            <person name="Brown A.J.P."/>
            <person name="Brunke S."/>
            <person name="Costanzo M.C."/>
            <person name="Fitzpatrick D.A."/>
            <person name="de Groot P.W.J."/>
            <person name="Harris D."/>
            <person name="Hoyer L.L."/>
            <person name="Hube B."/>
            <person name="Klis F.M."/>
            <person name="Kodira C."/>
            <person name="Lennard N."/>
            <person name="Logue M.E."/>
            <person name="Martin R."/>
            <person name="Neiman A.M."/>
            <person name="Nikolaou E."/>
            <person name="Quail M.A."/>
            <person name="Quinn J."/>
            <person name="Santos M.C."/>
            <person name="Schmitzberger F.F."/>
            <person name="Sherlock G."/>
            <person name="Shah P."/>
            <person name="Silverstein K.A.T."/>
            <person name="Skrzypek M.S."/>
            <person name="Soll D."/>
            <person name="Staggs R."/>
            <person name="Stansfield I."/>
            <person name="Stumpf M.P.H."/>
            <person name="Sudbery P.E."/>
            <person name="Srikantha T."/>
            <person name="Zeng Q."/>
            <person name="Berman J."/>
            <person name="Berriman M."/>
            <person name="Heitman J."/>
            <person name="Gow N.A.R."/>
            <person name="Lorenz M.C."/>
            <person name="Birren B.W."/>
            <person name="Kellis M."/>
            <person name="Cuomo C.A."/>
        </authorList>
    </citation>
    <scope>NUCLEOTIDE SEQUENCE [LARGE SCALE GENOMIC DNA]</scope>
    <source>
        <strain>ATCC 42720</strain>
    </source>
</reference>
<protein>
    <recommendedName>
        <fullName evidence="1">Methionine aminopeptidase 2</fullName>
        <shortName evidence="1">MAP 2</shortName>
        <shortName evidence="1">MetAP 2</shortName>
        <ecNumber evidence="1">3.4.11.18</ecNumber>
    </recommendedName>
    <alternativeName>
        <fullName evidence="1">Peptidase M</fullName>
    </alternativeName>
</protein>
<dbReference type="EC" id="3.4.11.18" evidence="1"/>
<dbReference type="EMBL" id="CH408077">
    <property type="protein sequence ID" value="EEQ37917.1"/>
    <property type="molecule type" value="Genomic_DNA"/>
</dbReference>
<dbReference type="RefSeq" id="XP_002618581.1">
    <property type="nucleotide sequence ID" value="XM_002618535.1"/>
</dbReference>
<dbReference type="SMR" id="C4Y1F8"/>
<dbReference type="FunCoup" id="C4Y1F8">
    <property type="interactions" value="1138"/>
</dbReference>
<dbReference type="STRING" id="306902.C4Y1F8"/>
<dbReference type="GeneID" id="8498874"/>
<dbReference type="KEGG" id="clu:CLUG_02040"/>
<dbReference type="VEuPathDB" id="FungiDB:CLUG_02040"/>
<dbReference type="HOGENOM" id="CLU_015857_7_1_1"/>
<dbReference type="InParanoid" id="C4Y1F8"/>
<dbReference type="OMA" id="PFAKRWL"/>
<dbReference type="OrthoDB" id="35851at4891"/>
<dbReference type="Proteomes" id="UP000007703">
    <property type="component" value="Unassembled WGS sequence"/>
</dbReference>
<dbReference type="GO" id="GO:0005737">
    <property type="term" value="C:cytoplasm"/>
    <property type="evidence" value="ECO:0007669"/>
    <property type="project" value="UniProtKB-SubCell"/>
</dbReference>
<dbReference type="GO" id="GO:0004239">
    <property type="term" value="F:initiator methionyl aminopeptidase activity"/>
    <property type="evidence" value="ECO:0007669"/>
    <property type="project" value="UniProtKB-UniRule"/>
</dbReference>
<dbReference type="GO" id="GO:0046872">
    <property type="term" value="F:metal ion binding"/>
    <property type="evidence" value="ECO:0007669"/>
    <property type="project" value="UniProtKB-UniRule"/>
</dbReference>
<dbReference type="GO" id="GO:0070006">
    <property type="term" value="F:metalloaminopeptidase activity"/>
    <property type="evidence" value="ECO:0007669"/>
    <property type="project" value="UniProtKB-UniRule"/>
</dbReference>
<dbReference type="GO" id="GO:0051604">
    <property type="term" value="P:protein maturation"/>
    <property type="evidence" value="ECO:0007669"/>
    <property type="project" value="EnsemblFungi"/>
</dbReference>
<dbReference type="GO" id="GO:0006508">
    <property type="term" value="P:proteolysis"/>
    <property type="evidence" value="ECO:0007669"/>
    <property type="project" value="UniProtKB-KW"/>
</dbReference>
<dbReference type="CDD" id="cd01088">
    <property type="entry name" value="MetAP2"/>
    <property type="match status" value="1"/>
</dbReference>
<dbReference type="Gene3D" id="3.90.230.10">
    <property type="entry name" value="Creatinase/methionine aminopeptidase superfamily"/>
    <property type="match status" value="1"/>
</dbReference>
<dbReference type="Gene3D" id="1.10.10.10">
    <property type="entry name" value="Winged helix-like DNA-binding domain superfamily/Winged helix DNA-binding domain"/>
    <property type="match status" value="1"/>
</dbReference>
<dbReference type="HAMAP" id="MF_03175">
    <property type="entry name" value="MetAP_2_euk"/>
    <property type="match status" value="1"/>
</dbReference>
<dbReference type="InterPro" id="IPR036005">
    <property type="entry name" value="Creatinase/aminopeptidase-like"/>
</dbReference>
<dbReference type="InterPro" id="IPR050247">
    <property type="entry name" value="Met_Aminopeptidase_Type2"/>
</dbReference>
<dbReference type="InterPro" id="IPR000994">
    <property type="entry name" value="Pept_M24"/>
</dbReference>
<dbReference type="InterPro" id="IPR001714">
    <property type="entry name" value="Pept_M24_MAP"/>
</dbReference>
<dbReference type="InterPro" id="IPR002468">
    <property type="entry name" value="Pept_M24A_MAP2"/>
</dbReference>
<dbReference type="InterPro" id="IPR018349">
    <property type="entry name" value="Pept_M24A_MAP2_BS"/>
</dbReference>
<dbReference type="InterPro" id="IPR036388">
    <property type="entry name" value="WH-like_DNA-bd_sf"/>
</dbReference>
<dbReference type="InterPro" id="IPR036390">
    <property type="entry name" value="WH_DNA-bd_sf"/>
</dbReference>
<dbReference type="NCBIfam" id="TIGR00501">
    <property type="entry name" value="met_pdase_II"/>
    <property type="match status" value="1"/>
</dbReference>
<dbReference type="PANTHER" id="PTHR45777">
    <property type="entry name" value="METHIONINE AMINOPEPTIDASE 2"/>
    <property type="match status" value="1"/>
</dbReference>
<dbReference type="PANTHER" id="PTHR45777:SF2">
    <property type="entry name" value="METHIONINE AMINOPEPTIDASE 2"/>
    <property type="match status" value="1"/>
</dbReference>
<dbReference type="Pfam" id="PF00557">
    <property type="entry name" value="Peptidase_M24"/>
    <property type="match status" value="1"/>
</dbReference>
<dbReference type="PRINTS" id="PR00599">
    <property type="entry name" value="MAPEPTIDASE"/>
</dbReference>
<dbReference type="SUPFAM" id="SSF55920">
    <property type="entry name" value="Creatinase/aminopeptidase"/>
    <property type="match status" value="1"/>
</dbReference>
<dbReference type="SUPFAM" id="SSF46785">
    <property type="entry name" value="Winged helix' DNA-binding domain"/>
    <property type="match status" value="1"/>
</dbReference>
<dbReference type="PROSITE" id="PS01202">
    <property type="entry name" value="MAP_2"/>
    <property type="match status" value="1"/>
</dbReference>
<sequence>MASAQTGTEMSPHHVTRTYKHENFLSFISTMSEKETVETTQEPKQVVEPTQELEELAIDGDQAAAKKKKSKKKKKKAVSLDKTYADGVFPEGQWMEYPLEVNSYRTTDEEKRYLDRQQNNHWQDFRKGAEVHRRVRQKAQQQIKPGMTMLEIADLIENSIRTYTGNDHTLKQGIGFPTGLSLNHVAAHYTPNSNDKVVLKYEDVMKVDIGVHVNGHIVDSAFTLTFDDKYDNLLTAVREATYTGVKEAGIDVRLNDIGAAVQEVMESYEVELDGKTYPVKCIRNLNGHNIGDYVIHSGKTVPIVANGDMTKMEEGETFAIETFGTTGKGYVIPQGECSHYALNQDIDGVKLPSERAKSLVKSIKDNFGTLPWCRRYLERAGEDKYLLALNQLVRAGVVEDYPPLVDTSGSYTAQYEHTILLHPHKKEVVSKGDDY</sequence>
<feature type="chain" id="PRO_0000407649" description="Methionine aminopeptidase 2">
    <location>
        <begin position="1"/>
        <end position="435"/>
    </location>
</feature>
<feature type="region of interest" description="Disordered" evidence="2">
    <location>
        <begin position="57"/>
        <end position="77"/>
    </location>
</feature>
<feature type="compositionally biased region" description="Basic residues" evidence="2">
    <location>
        <begin position="65"/>
        <end position="77"/>
    </location>
</feature>
<feature type="binding site" evidence="1">
    <location>
        <position position="188"/>
    </location>
    <ligand>
        <name>substrate</name>
    </ligand>
</feature>
<feature type="binding site" evidence="1">
    <location>
        <position position="208"/>
    </location>
    <ligand>
        <name>a divalent metal cation</name>
        <dbReference type="ChEBI" id="CHEBI:60240"/>
        <label>1</label>
    </ligand>
</feature>
<feature type="binding site" evidence="1">
    <location>
        <position position="219"/>
    </location>
    <ligand>
        <name>a divalent metal cation</name>
        <dbReference type="ChEBI" id="CHEBI:60240"/>
        <label>1</label>
    </ligand>
</feature>
<feature type="binding site" evidence="1">
    <location>
        <position position="219"/>
    </location>
    <ligand>
        <name>a divalent metal cation</name>
        <dbReference type="ChEBI" id="CHEBI:60240"/>
        <label>2</label>
        <note>catalytic</note>
    </ligand>
</feature>
<feature type="binding site" evidence="1">
    <location>
        <position position="288"/>
    </location>
    <ligand>
        <name>a divalent metal cation</name>
        <dbReference type="ChEBI" id="CHEBI:60240"/>
        <label>2</label>
        <note>catalytic</note>
    </ligand>
</feature>
<feature type="binding site" evidence="1">
    <location>
        <position position="296"/>
    </location>
    <ligand>
        <name>substrate</name>
    </ligand>
</feature>
<feature type="binding site" evidence="1">
    <location>
        <position position="321"/>
    </location>
    <ligand>
        <name>a divalent metal cation</name>
        <dbReference type="ChEBI" id="CHEBI:60240"/>
        <label>2</label>
        <note>catalytic</note>
    </ligand>
</feature>
<feature type="binding site" evidence="1">
    <location>
        <position position="416"/>
    </location>
    <ligand>
        <name>a divalent metal cation</name>
        <dbReference type="ChEBI" id="CHEBI:60240"/>
        <label>1</label>
    </ligand>
</feature>
<feature type="binding site" evidence="1">
    <location>
        <position position="416"/>
    </location>
    <ligand>
        <name>a divalent metal cation</name>
        <dbReference type="ChEBI" id="CHEBI:60240"/>
        <label>2</label>
        <note>catalytic</note>
    </ligand>
</feature>
<keyword id="KW-0031">Aminopeptidase</keyword>
<keyword id="KW-0963">Cytoplasm</keyword>
<keyword id="KW-0378">Hydrolase</keyword>
<keyword id="KW-0479">Metal-binding</keyword>
<keyword id="KW-0645">Protease</keyword>
<keyword id="KW-1185">Reference proteome</keyword>
<accession>C4Y1F8</accession>
<name>MAP2_CLAL4</name>
<comment type="function">
    <text evidence="1">Cotranslationally removes the N-terminal methionine from nascent proteins. The N-terminal methionine is often cleaved when the second residue in the primary sequence is small and uncharged (Met-Ala-, Cys, Gly, Pro, Ser, Thr, or Val).</text>
</comment>
<comment type="catalytic activity">
    <reaction evidence="1">
        <text>Release of N-terminal amino acids, preferentially methionine, from peptides and arylamides.</text>
        <dbReference type="EC" id="3.4.11.18"/>
    </reaction>
</comment>
<comment type="cofactor">
    <cofactor evidence="1">
        <name>Co(2+)</name>
        <dbReference type="ChEBI" id="CHEBI:48828"/>
    </cofactor>
    <cofactor evidence="1">
        <name>Zn(2+)</name>
        <dbReference type="ChEBI" id="CHEBI:29105"/>
    </cofactor>
    <cofactor evidence="1">
        <name>Mn(2+)</name>
        <dbReference type="ChEBI" id="CHEBI:29035"/>
    </cofactor>
    <cofactor evidence="1">
        <name>Fe(2+)</name>
        <dbReference type="ChEBI" id="CHEBI:29033"/>
    </cofactor>
    <text evidence="1">Binds 2 divalent metal cations per subunit. Has a high-affinity and a low affinity metal-binding site. The true nature of the physiological cofactor is under debate. The enzyme is active with cobalt, zinc, manganese or divalent iron ions. Most likely, methionine aminopeptidases function as mononuclear Fe(2+)-metalloproteases under physiological conditions, and the catalytically relevant metal-binding site has been assigned to the histidine-containing high-affinity site.</text>
</comment>
<comment type="subcellular location">
    <subcellularLocation>
        <location evidence="1">Cytoplasm</location>
    </subcellularLocation>
</comment>
<comment type="similarity">
    <text evidence="1">Belongs to the peptidase M24A family. Methionine aminopeptidase eukaryotic type 2 subfamily.</text>
</comment>
<evidence type="ECO:0000255" key="1">
    <source>
        <dbReference type="HAMAP-Rule" id="MF_03175"/>
    </source>
</evidence>
<evidence type="ECO:0000256" key="2">
    <source>
        <dbReference type="SAM" id="MobiDB-lite"/>
    </source>
</evidence>
<proteinExistence type="inferred from homology"/>